<protein>
    <recommendedName>
        <fullName evidence="1">3-dehydroquinate dehydratase</fullName>
        <shortName evidence="1">3-dehydroquinase</shortName>
        <ecNumber evidence="1">4.2.1.10</ecNumber>
    </recommendedName>
    <alternativeName>
        <fullName evidence="1">Type II DHQase</fullName>
    </alternativeName>
</protein>
<sequence length="144" mass="15802">MQLLVLQGPNLNMLGQREPTIYGSTSLADIHNAMREKATSAGIELSFIQSNHEGVLVDTLHAHYGKIQGIIINPGALTHYGLSLRDGLALMDVPIIEVHLSNVYAREAFRHHSVVAAIAQGQISGLGWQGYLYALDWFIQRKSA</sequence>
<feature type="chain" id="PRO_1000097605" description="3-dehydroquinate dehydratase">
    <location>
        <begin position="1"/>
        <end position="144"/>
    </location>
</feature>
<feature type="active site" description="Proton acceptor" evidence="1">
    <location>
        <position position="22"/>
    </location>
</feature>
<feature type="active site" description="Proton donor" evidence="1">
    <location>
        <position position="99"/>
    </location>
</feature>
<feature type="binding site" evidence="1">
    <location>
        <position position="73"/>
    </location>
    <ligand>
        <name>substrate</name>
    </ligand>
</feature>
<feature type="binding site" evidence="1">
    <location>
        <position position="79"/>
    </location>
    <ligand>
        <name>substrate</name>
    </ligand>
</feature>
<feature type="binding site" evidence="1">
    <location>
        <position position="86"/>
    </location>
    <ligand>
        <name>substrate</name>
    </ligand>
</feature>
<feature type="binding site" evidence="1">
    <location>
        <begin position="100"/>
        <end position="101"/>
    </location>
    <ligand>
        <name>substrate</name>
    </ligand>
</feature>
<feature type="binding site" evidence="1">
    <location>
        <position position="110"/>
    </location>
    <ligand>
        <name>substrate</name>
    </ligand>
</feature>
<feature type="site" description="Transition state stabilizer" evidence="1">
    <location>
        <position position="17"/>
    </location>
</feature>
<gene>
    <name evidence="1" type="primary">aroQ</name>
    <name type="ordered locus">Haur_2973</name>
</gene>
<name>AROQ_HERA2</name>
<evidence type="ECO:0000255" key="1">
    <source>
        <dbReference type="HAMAP-Rule" id="MF_00169"/>
    </source>
</evidence>
<keyword id="KW-0028">Amino-acid biosynthesis</keyword>
<keyword id="KW-0057">Aromatic amino acid biosynthesis</keyword>
<keyword id="KW-0456">Lyase</keyword>
<comment type="function">
    <text evidence="1">Catalyzes a trans-dehydration via an enolate intermediate.</text>
</comment>
<comment type="catalytic activity">
    <reaction evidence="1">
        <text>3-dehydroquinate = 3-dehydroshikimate + H2O</text>
        <dbReference type="Rhea" id="RHEA:21096"/>
        <dbReference type="ChEBI" id="CHEBI:15377"/>
        <dbReference type="ChEBI" id="CHEBI:16630"/>
        <dbReference type="ChEBI" id="CHEBI:32364"/>
        <dbReference type="EC" id="4.2.1.10"/>
    </reaction>
</comment>
<comment type="pathway">
    <text evidence="1">Metabolic intermediate biosynthesis; chorismate biosynthesis; chorismate from D-erythrose 4-phosphate and phosphoenolpyruvate: step 3/7.</text>
</comment>
<comment type="subunit">
    <text evidence="1">Homododecamer.</text>
</comment>
<comment type="similarity">
    <text evidence="1">Belongs to the type-II 3-dehydroquinase family.</text>
</comment>
<reference key="1">
    <citation type="journal article" date="2011" name="Stand. Genomic Sci.">
        <title>Complete genome sequence of the filamentous gliding predatory bacterium Herpetosiphon aurantiacus type strain (114-95(T)).</title>
        <authorList>
            <person name="Kiss H."/>
            <person name="Nett M."/>
            <person name="Domin N."/>
            <person name="Martin K."/>
            <person name="Maresca J.A."/>
            <person name="Copeland A."/>
            <person name="Lapidus A."/>
            <person name="Lucas S."/>
            <person name="Berry K.W."/>
            <person name="Glavina Del Rio T."/>
            <person name="Dalin E."/>
            <person name="Tice H."/>
            <person name="Pitluck S."/>
            <person name="Richardson P."/>
            <person name="Bruce D."/>
            <person name="Goodwin L."/>
            <person name="Han C."/>
            <person name="Detter J.C."/>
            <person name="Schmutz J."/>
            <person name="Brettin T."/>
            <person name="Land M."/>
            <person name="Hauser L."/>
            <person name="Kyrpides N.C."/>
            <person name="Ivanova N."/>
            <person name="Goeker M."/>
            <person name="Woyke T."/>
            <person name="Klenk H.P."/>
            <person name="Bryant D.A."/>
        </authorList>
    </citation>
    <scope>NUCLEOTIDE SEQUENCE [LARGE SCALE GENOMIC DNA]</scope>
    <source>
        <strain>ATCC 23779 / DSM 785 / 114-95</strain>
    </source>
</reference>
<proteinExistence type="inferred from homology"/>
<organism>
    <name type="scientific">Herpetosiphon aurantiacus (strain ATCC 23779 / DSM 785 / 114-95)</name>
    <dbReference type="NCBI Taxonomy" id="316274"/>
    <lineage>
        <taxon>Bacteria</taxon>
        <taxon>Bacillati</taxon>
        <taxon>Chloroflexota</taxon>
        <taxon>Chloroflexia</taxon>
        <taxon>Herpetosiphonales</taxon>
        <taxon>Herpetosiphonaceae</taxon>
        <taxon>Herpetosiphon</taxon>
    </lineage>
</organism>
<accession>A9B3N9</accession>
<dbReference type="EC" id="4.2.1.10" evidence="1"/>
<dbReference type="EMBL" id="CP000875">
    <property type="protein sequence ID" value="ABX05611.1"/>
    <property type="molecule type" value="Genomic_DNA"/>
</dbReference>
<dbReference type="SMR" id="A9B3N9"/>
<dbReference type="FunCoup" id="A9B3N9">
    <property type="interactions" value="197"/>
</dbReference>
<dbReference type="STRING" id="316274.Haur_2973"/>
<dbReference type="KEGG" id="hau:Haur_2973"/>
<dbReference type="eggNOG" id="COG0757">
    <property type="taxonomic scope" value="Bacteria"/>
</dbReference>
<dbReference type="HOGENOM" id="CLU_090968_1_0_0"/>
<dbReference type="InParanoid" id="A9B3N9"/>
<dbReference type="UniPathway" id="UPA00053">
    <property type="reaction ID" value="UER00086"/>
</dbReference>
<dbReference type="Proteomes" id="UP000000787">
    <property type="component" value="Chromosome"/>
</dbReference>
<dbReference type="GO" id="GO:0003855">
    <property type="term" value="F:3-dehydroquinate dehydratase activity"/>
    <property type="evidence" value="ECO:0007669"/>
    <property type="project" value="UniProtKB-UniRule"/>
</dbReference>
<dbReference type="GO" id="GO:0008652">
    <property type="term" value="P:amino acid biosynthetic process"/>
    <property type="evidence" value="ECO:0007669"/>
    <property type="project" value="UniProtKB-KW"/>
</dbReference>
<dbReference type="GO" id="GO:0009073">
    <property type="term" value="P:aromatic amino acid family biosynthetic process"/>
    <property type="evidence" value="ECO:0007669"/>
    <property type="project" value="UniProtKB-KW"/>
</dbReference>
<dbReference type="GO" id="GO:0009423">
    <property type="term" value="P:chorismate biosynthetic process"/>
    <property type="evidence" value="ECO:0007669"/>
    <property type="project" value="UniProtKB-UniRule"/>
</dbReference>
<dbReference type="GO" id="GO:0019631">
    <property type="term" value="P:quinate catabolic process"/>
    <property type="evidence" value="ECO:0007669"/>
    <property type="project" value="TreeGrafter"/>
</dbReference>
<dbReference type="CDD" id="cd00466">
    <property type="entry name" value="DHQase_II"/>
    <property type="match status" value="1"/>
</dbReference>
<dbReference type="Gene3D" id="3.40.50.9100">
    <property type="entry name" value="Dehydroquinase, class II"/>
    <property type="match status" value="1"/>
</dbReference>
<dbReference type="HAMAP" id="MF_00169">
    <property type="entry name" value="AroQ"/>
    <property type="match status" value="1"/>
</dbReference>
<dbReference type="InterPro" id="IPR001874">
    <property type="entry name" value="DHquinase_II"/>
</dbReference>
<dbReference type="InterPro" id="IPR018509">
    <property type="entry name" value="DHquinase_II_CS"/>
</dbReference>
<dbReference type="InterPro" id="IPR036441">
    <property type="entry name" value="DHquinase_II_sf"/>
</dbReference>
<dbReference type="NCBIfam" id="TIGR01088">
    <property type="entry name" value="aroQ"/>
    <property type="match status" value="1"/>
</dbReference>
<dbReference type="NCBIfam" id="NF003805">
    <property type="entry name" value="PRK05395.1-2"/>
    <property type="match status" value="1"/>
</dbReference>
<dbReference type="NCBIfam" id="NF003806">
    <property type="entry name" value="PRK05395.1-3"/>
    <property type="match status" value="1"/>
</dbReference>
<dbReference type="NCBIfam" id="NF003807">
    <property type="entry name" value="PRK05395.1-4"/>
    <property type="match status" value="1"/>
</dbReference>
<dbReference type="PANTHER" id="PTHR21272">
    <property type="entry name" value="CATABOLIC 3-DEHYDROQUINASE"/>
    <property type="match status" value="1"/>
</dbReference>
<dbReference type="PANTHER" id="PTHR21272:SF3">
    <property type="entry name" value="CATABOLIC 3-DEHYDROQUINASE"/>
    <property type="match status" value="1"/>
</dbReference>
<dbReference type="Pfam" id="PF01220">
    <property type="entry name" value="DHquinase_II"/>
    <property type="match status" value="1"/>
</dbReference>
<dbReference type="PIRSF" id="PIRSF001399">
    <property type="entry name" value="DHquinase_II"/>
    <property type="match status" value="1"/>
</dbReference>
<dbReference type="SUPFAM" id="SSF52304">
    <property type="entry name" value="Type II 3-dehydroquinate dehydratase"/>
    <property type="match status" value="1"/>
</dbReference>
<dbReference type="PROSITE" id="PS01029">
    <property type="entry name" value="DEHYDROQUINASE_II"/>
    <property type="match status" value="1"/>
</dbReference>